<reference key="1">
    <citation type="journal article" date="2007" name="J. Bacteriol.">
        <title>The complete genome sequence of Bacillus thuringiensis Al Hakam.</title>
        <authorList>
            <person name="Challacombe J.F."/>
            <person name="Altherr M.R."/>
            <person name="Xie G."/>
            <person name="Bhotika S.S."/>
            <person name="Brown N."/>
            <person name="Bruce D."/>
            <person name="Campbell C.S."/>
            <person name="Campbell M.L."/>
            <person name="Chen J."/>
            <person name="Chertkov O."/>
            <person name="Cleland C."/>
            <person name="Dimitrijevic M."/>
            <person name="Doggett N.A."/>
            <person name="Fawcett J.J."/>
            <person name="Glavina T."/>
            <person name="Goodwin L.A."/>
            <person name="Green L.D."/>
            <person name="Han C.S."/>
            <person name="Hill K.K."/>
            <person name="Hitchcock P."/>
            <person name="Jackson P.J."/>
            <person name="Keim P."/>
            <person name="Kewalramani A.R."/>
            <person name="Longmire J."/>
            <person name="Lucas S."/>
            <person name="Malfatti S."/>
            <person name="Martinez D."/>
            <person name="McMurry K."/>
            <person name="Meincke L.J."/>
            <person name="Misra M."/>
            <person name="Moseman B.L."/>
            <person name="Mundt M."/>
            <person name="Munk A.C."/>
            <person name="Okinaka R.T."/>
            <person name="Parson-Quintana B."/>
            <person name="Reilly L.P."/>
            <person name="Richardson P."/>
            <person name="Robinson D.L."/>
            <person name="Saunders E."/>
            <person name="Tapia R."/>
            <person name="Tesmer J.G."/>
            <person name="Thayer N."/>
            <person name="Thompson L.S."/>
            <person name="Tice H."/>
            <person name="Ticknor L.O."/>
            <person name="Wills P.L."/>
            <person name="Gilna P."/>
            <person name="Brettin T.S."/>
        </authorList>
    </citation>
    <scope>NUCLEOTIDE SEQUENCE [LARGE SCALE GENOMIC DNA]</scope>
    <source>
        <strain>Al Hakam</strain>
    </source>
</reference>
<accession>A0RJJ8</accession>
<sequence>MLRDLFVKKKKYAAIPSEQVRKDVPDGVMTKCPKCKKIMYTKEVLKNLKVCVNCGYHHPMNAWERLDSILDEGSFREYDKEMVSLNPLEFPNYEEKLESDRKKTELNEAVVTGEGTIDDMLVVVAVMDSRFRMGSMGSVVGEKIARAVEKAYDLQVPFIIFTASGGARMQEGILSLMQMAKTSVALKKHSNAGGLFISVMTHPTTGGVSASFASIGDYNLAEPGALIGFAGRRVIEQTVREKLPEDFQTAEFLLEHGQLDAVVHRDDMRESLRKILEVHQGGEMAVWQS</sequence>
<keyword id="KW-0067">ATP-binding</keyword>
<keyword id="KW-0963">Cytoplasm</keyword>
<keyword id="KW-0275">Fatty acid biosynthesis</keyword>
<keyword id="KW-0276">Fatty acid metabolism</keyword>
<keyword id="KW-0444">Lipid biosynthesis</keyword>
<keyword id="KW-0443">Lipid metabolism</keyword>
<keyword id="KW-0479">Metal-binding</keyword>
<keyword id="KW-0547">Nucleotide-binding</keyword>
<keyword id="KW-0808">Transferase</keyword>
<keyword id="KW-0862">Zinc</keyword>
<keyword id="KW-0863">Zinc-finger</keyword>
<proteinExistence type="inferred from homology"/>
<feature type="chain" id="PRO_0000389687" description="Acetyl-coenzyme A carboxylase carboxyl transferase subunit beta">
    <location>
        <begin position="1"/>
        <end position="289"/>
    </location>
</feature>
<feature type="domain" description="CoA carboxyltransferase N-terminal" evidence="2">
    <location>
        <begin position="28"/>
        <end position="289"/>
    </location>
</feature>
<feature type="zinc finger region" description="C4-type" evidence="1">
    <location>
        <begin position="32"/>
        <end position="54"/>
    </location>
</feature>
<feature type="binding site" evidence="1">
    <location>
        <position position="32"/>
    </location>
    <ligand>
        <name>Zn(2+)</name>
        <dbReference type="ChEBI" id="CHEBI:29105"/>
    </ligand>
</feature>
<feature type="binding site" evidence="1">
    <location>
        <position position="35"/>
    </location>
    <ligand>
        <name>Zn(2+)</name>
        <dbReference type="ChEBI" id="CHEBI:29105"/>
    </ligand>
</feature>
<feature type="binding site" evidence="1">
    <location>
        <position position="51"/>
    </location>
    <ligand>
        <name>Zn(2+)</name>
        <dbReference type="ChEBI" id="CHEBI:29105"/>
    </ligand>
</feature>
<feature type="binding site" evidence="1">
    <location>
        <position position="54"/>
    </location>
    <ligand>
        <name>Zn(2+)</name>
        <dbReference type="ChEBI" id="CHEBI:29105"/>
    </ligand>
</feature>
<dbReference type="EC" id="2.1.3.15" evidence="1"/>
<dbReference type="EMBL" id="CP000485">
    <property type="protein sequence ID" value="ABK87391.1"/>
    <property type="molecule type" value="Genomic_DNA"/>
</dbReference>
<dbReference type="RefSeq" id="WP_000942873.1">
    <property type="nucleotide sequence ID" value="NC_008600.1"/>
</dbReference>
<dbReference type="SMR" id="A0RJJ8"/>
<dbReference type="KEGG" id="btl:BALH_4184"/>
<dbReference type="HOGENOM" id="CLU_015486_1_1_9"/>
<dbReference type="UniPathway" id="UPA00655">
    <property type="reaction ID" value="UER00711"/>
</dbReference>
<dbReference type="GO" id="GO:0009317">
    <property type="term" value="C:acetyl-CoA carboxylase complex"/>
    <property type="evidence" value="ECO:0007669"/>
    <property type="project" value="InterPro"/>
</dbReference>
<dbReference type="GO" id="GO:0003989">
    <property type="term" value="F:acetyl-CoA carboxylase activity"/>
    <property type="evidence" value="ECO:0007669"/>
    <property type="project" value="InterPro"/>
</dbReference>
<dbReference type="GO" id="GO:0005524">
    <property type="term" value="F:ATP binding"/>
    <property type="evidence" value="ECO:0007669"/>
    <property type="project" value="UniProtKB-KW"/>
</dbReference>
<dbReference type="GO" id="GO:0016743">
    <property type="term" value="F:carboxyl- or carbamoyltransferase activity"/>
    <property type="evidence" value="ECO:0007669"/>
    <property type="project" value="UniProtKB-UniRule"/>
</dbReference>
<dbReference type="GO" id="GO:0008270">
    <property type="term" value="F:zinc ion binding"/>
    <property type="evidence" value="ECO:0007669"/>
    <property type="project" value="UniProtKB-UniRule"/>
</dbReference>
<dbReference type="GO" id="GO:0006633">
    <property type="term" value="P:fatty acid biosynthetic process"/>
    <property type="evidence" value="ECO:0007669"/>
    <property type="project" value="UniProtKB-KW"/>
</dbReference>
<dbReference type="GO" id="GO:2001295">
    <property type="term" value="P:malonyl-CoA biosynthetic process"/>
    <property type="evidence" value="ECO:0007669"/>
    <property type="project" value="UniProtKB-UniRule"/>
</dbReference>
<dbReference type="Gene3D" id="3.90.226.10">
    <property type="entry name" value="2-enoyl-CoA Hydratase, Chain A, domain 1"/>
    <property type="match status" value="1"/>
</dbReference>
<dbReference type="HAMAP" id="MF_01395">
    <property type="entry name" value="AcetylCoA_CT_beta"/>
    <property type="match status" value="1"/>
</dbReference>
<dbReference type="InterPro" id="IPR034733">
    <property type="entry name" value="AcCoA_carboxyl_beta"/>
</dbReference>
<dbReference type="InterPro" id="IPR000438">
    <property type="entry name" value="Acetyl_CoA_COase_Trfase_b_su"/>
</dbReference>
<dbReference type="InterPro" id="IPR029045">
    <property type="entry name" value="ClpP/crotonase-like_dom_sf"/>
</dbReference>
<dbReference type="InterPro" id="IPR011762">
    <property type="entry name" value="COA_CT_N"/>
</dbReference>
<dbReference type="InterPro" id="IPR041010">
    <property type="entry name" value="Znf-ACC"/>
</dbReference>
<dbReference type="NCBIfam" id="TIGR00515">
    <property type="entry name" value="accD"/>
    <property type="match status" value="1"/>
</dbReference>
<dbReference type="PANTHER" id="PTHR42995">
    <property type="entry name" value="ACETYL-COENZYME A CARBOXYLASE CARBOXYL TRANSFERASE SUBUNIT BETA, CHLOROPLASTIC"/>
    <property type="match status" value="1"/>
</dbReference>
<dbReference type="PANTHER" id="PTHR42995:SF5">
    <property type="entry name" value="ACETYL-COENZYME A CARBOXYLASE CARBOXYL TRANSFERASE SUBUNIT BETA, CHLOROPLASTIC"/>
    <property type="match status" value="1"/>
</dbReference>
<dbReference type="Pfam" id="PF01039">
    <property type="entry name" value="Carboxyl_trans"/>
    <property type="match status" value="1"/>
</dbReference>
<dbReference type="Pfam" id="PF17848">
    <property type="entry name" value="Zn_ribbon_ACC"/>
    <property type="match status" value="1"/>
</dbReference>
<dbReference type="PRINTS" id="PR01070">
    <property type="entry name" value="ACCCTRFRASEB"/>
</dbReference>
<dbReference type="SUPFAM" id="SSF52096">
    <property type="entry name" value="ClpP/crotonase"/>
    <property type="match status" value="1"/>
</dbReference>
<dbReference type="PROSITE" id="PS50980">
    <property type="entry name" value="COA_CT_NTER"/>
    <property type="match status" value="1"/>
</dbReference>
<evidence type="ECO:0000255" key="1">
    <source>
        <dbReference type="HAMAP-Rule" id="MF_01395"/>
    </source>
</evidence>
<evidence type="ECO:0000255" key="2">
    <source>
        <dbReference type="PROSITE-ProRule" id="PRU01136"/>
    </source>
</evidence>
<protein>
    <recommendedName>
        <fullName evidence="1">Acetyl-coenzyme A carboxylase carboxyl transferase subunit beta</fullName>
        <shortName evidence="1">ACCase subunit beta</shortName>
        <shortName evidence="1">Acetyl-CoA carboxylase carboxyltransferase subunit beta</shortName>
        <ecNumber evidence="1">2.1.3.15</ecNumber>
    </recommendedName>
</protein>
<organism>
    <name type="scientific">Bacillus thuringiensis (strain Al Hakam)</name>
    <dbReference type="NCBI Taxonomy" id="412694"/>
    <lineage>
        <taxon>Bacteria</taxon>
        <taxon>Bacillati</taxon>
        <taxon>Bacillota</taxon>
        <taxon>Bacilli</taxon>
        <taxon>Bacillales</taxon>
        <taxon>Bacillaceae</taxon>
        <taxon>Bacillus</taxon>
        <taxon>Bacillus cereus group</taxon>
    </lineage>
</organism>
<gene>
    <name evidence="1" type="primary">accD</name>
    <name type="ordered locus">BALH_4184</name>
</gene>
<comment type="function">
    <text evidence="1">Component of the acetyl coenzyme A carboxylase (ACC) complex. Biotin carboxylase (BC) catalyzes the carboxylation of biotin on its carrier protein (BCCP) and then the CO(2) group is transferred by the transcarboxylase to acetyl-CoA to form malonyl-CoA.</text>
</comment>
<comment type="catalytic activity">
    <reaction evidence="1">
        <text>N(6)-carboxybiotinyl-L-lysyl-[protein] + acetyl-CoA = N(6)-biotinyl-L-lysyl-[protein] + malonyl-CoA</text>
        <dbReference type="Rhea" id="RHEA:54728"/>
        <dbReference type="Rhea" id="RHEA-COMP:10505"/>
        <dbReference type="Rhea" id="RHEA-COMP:10506"/>
        <dbReference type="ChEBI" id="CHEBI:57288"/>
        <dbReference type="ChEBI" id="CHEBI:57384"/>
        <dbReference type="ChEBI" id="CHEBI:83144"/>
        <dbReference type="ChEBI" id="CHEBI:83145"/>
        <dbReference type="EC" id="2.1.3.15"/>
    </reaction>
</comment>
<comment type="cofactor">
    <cofactor evidence="1">
        <name>Zn(2+)</name>
        <dbReference type="ChEBI" id="CHEBI:29105"/>
    </cofactor>
    <text evidence="1">Binds 1 zinc ion per subunit.</text>
</comment>
<comment type="pathway">
    <text evidence="1">Lipid metabolism; malonyl-CoA biosynthesis; malonyl-CoA from acetyl-CoA: step 1/1.</text>
</comment>
<comment type="subunit">
    <text evidence="1">Acetyl-CoA carboxylase is a heterohexamer composed of biotin carboxyl carrier protein (AccB), biotin carboxylase (AccC) and two subunits each of ACCase subunit alpha (AccA) and ACCase subunit beta (AccD).</text>
</comment>
<comment type="subcellular location">
    <subcellularLocation>
        <location evidence="1">Cytoplasm</location>
    </subcellularLocation>
</comment>
<comment type="similarity">
    <text evidence="1">Belongs to the AccD/PCCB family.</text>
</comment>
<name>ACCD_BACAH</name>